<accession>P85284</accession>
<feature type="chain" id="PRO_0000306191" description="Nucleoside diphosphate kinase B">
    <location>
        <begin position="1" status="less than"/>
        <end position="126"/>
    </location>
</feature>
<feature type="active site" description="Pros-phosphohistidine intermediate" evidence="1 4">
    <location>
        <position position="92"/>
    </location>
</feature>
<feature type="binding site" evidence="1">
    <location>
        <position position="6"/>
    </location>
    <ligand>
        <name>ATP</name>
        <dbReference type="ChEBI" id="CHEBI:30616"/>
    </ligand>
</feature>
<feature type="binding site" evidence="1">
    <location>
        <position position="37"/>
    </location>
    <ligand>
        <name>ATP</name>
        <dbReference type="ChEBI" id="CHEBI:30616"/>
    </ligand>
</feature>
<feature type="binding site" evidence="1">
    <location>
        <position position="68"/>
    </location>
    <ligand>
        <name>ATP</name>
        <dbReference type="ChEBI" id="CHEBI:30616"/>
    </ligand>
</feature>
<feature type="binding site" evidence="1">
    <location>
        <position position="79"/>
    </location>
    <ligand>
        <name>ATP</name>
        <dbReference type="ChEBI" id="CHEBI:30616"/>
    </ligand>
</feature>
<feature type="binding site" evidence="1">
    <location>
        <position position="89"/>
    </location>
    <ligand>
        <name>ATP</name>
        <dbReference type="ChEBI" id="CHEBI:30616"/>
    </ligand>
</feature>
<feature type="non-consecutive residues" evidence="6">
    <location>
        <begin position="20"/>
        <end position="21"/>
    </location>
</feature>
<feature type="non-consecutive residues" evidence="6">
    <location>
        <begin position="24"/>
        <end position="25"/>
    </location>
</feature>
<feature type="non-consecutive residues" evidence="6">
    <location>
        <begin position="62"/>
        <end position="63"/>
    </location>
</feature>
<feature type="non-terminal residue" evidence="6">
    <location>
        <position position="1"/>
    </location>
</feature>
<sequence>TFVAIKPDGVQRGLCGEVMKFIQPMKQHYLDLKDMPFYAGLCKYMSSGPVFAMVWEGEGIVKMMLGETNPADSKPGSIRGDFCINIGRNIIHGSDTVENAKMEVALWFKPEEFVTYTEKAKAWVYE</sequence>
<proteinExistence type="evidence at protein level"/>
<name>NDKB_MERPA</name>
<gene>
    <name type="primary">nme2</name>
</gene>
<dbReference type="EC" id="2.7.4.6"/>
<dbReference type="SMR" id="P85284"/>
<dbReference type="BRENDA" id="2.7.4.6">
    <property type="organism ID" value="10451"/>
</dbReference>
<dbReference type="GO" id="GO:0005737">
    <property type="term" value="C:cytoplasm"/>
    <property type="evidence" value="ECO:0007669"/>
    <property type="project" value="UniProtKB-SubCell"/>
</dbReference>
<dbReference type="GO" id="GO:0030027">
    <property type="term" value="C:lamellipodium"/>
    <property type="evidence" value="ECO:0007669"/>
    <property type="project" value="UniProtKB-SubCell"/>
</dbReference>
<dbReference type="GO" id="GO:0005634">
    <property type="term" value="C:nucleus"/>
    <property type="evidence" value="ECO:0007669"/>
    <property type="project" value="UniProtKB-SubCell"/>
</dbReference>
<dbReference type="GO" id="GO:0001726">
    <property type="term" value="C:ruffle"/>
    <property type="evidence" value="ECO:0007669"/>
    <property type="project" value="UniProtKB-SubCell"/>
</dbReference>
<dbReference type="GO" id="GO:0005524">
    <property type="term" value="F:ATP binding"/>
    <property type="evidence" value="ECO:0007669"/>
    <property type="project" value="UniProtKB-KW"/>
</dbReference>
<dbReference type="GO" id="GO:0046872">
    <property type="term" value="F:metal ion binding"/>
    <property type="evidence" value="ECO:0007669"/>
    <property type="project" value="UniProtKB-KW"/>
</dbReference>
<dbReference type="GO" id="GO:0004550">
    <property type="term" value="F:nucleoside diphosphate kinase activity"/>
    <property type="evidence" value="ECO:0007669"/>
    <property type="project" value="UniProtKB-EC"/>
</dbReference>
<dbReference type="GO" id="GO:0006241">
    <property type="term" value="P:CTP biosynthetic process"/>
    <property type="evidence" value="ECO:0007669"/>
    <property type="project" value="InterPro"/>
</dbReference>
<dbReference type="GO" id="GO:0006183">
    <property type="term" value="P:GTP biosynthetic process"/>
    <property type="evidence" value="ECO:0007669"/>
    <property type="project" value="InterPro"/>
</dbReference>
<dbReference type="GO" id="GO:0006228">
    <property type="term" value="P:UTP biosynthetic process"/>
    <property type="evidence" value="ECO:0007669"/>
    <property type="project" value="InterPro"/>
</dbReference>
<dbReference type="CDD" id="cd04413">
    <property type="entry name" value="NDPk_I"/>
    <property type="match status" value="1"/>
</dbReference>
<dbReference type="FunFam" id="3.30.70.141:FF:000039">
    <property type="entry name" value="Nucleoside diphosphate kinase B"/>
    <property type="match status" value="1"/>
</dbReference>
<dbReference type="Gene3D" id="3.30.70.141">
    <property type="entry name" value="Nucleoside diphosphate kinase-like domain"/>
    <property type="match status" value="1"/>
</dbReference>
<dbReference type="InterPro" id="IPR034907">
    <property type="entry name" value="NDK-like_dom"/>
</dbReference>
<dbReference type="InterPro" id="IPR036850">
    <property type="entry name" value="NDK-like_dom_sf"/>
</dbReference>
<dbReference type="InterPro" id="IPR001564">
    <property type="entry name" value="Nucleoside_diP_kinase"/>
</dbReference>
<dbReference type="PANTHER" id="PTHR11349">
    <property type="entry name" value="NUCLEOSIDE DIPHOSPHATE KINASE"/>
    <property type="match status" value="1"/>
</dbReference>
<dbReference type="Pfam" id="PF00334">
    <property type="entry name" value="NDK"/>
    <property type="match status" value="1"/>
</dbReference>
<dbReference type="PRINTS" id="PR01243">
    <property type="entry name" value="NUCDPKINASE"/>
</dbReference>
<dbReference type="SMART" id="SM00562">
    <property type="entry name" value="NDK"/>
    <property type="match status" value="1"/>
</dbReference>
<dbReference type="SUPFAM" id="SSF54919">
    <property type="entry name" value="Nucleoside diphosphate kinase, NDK"/>
    <property type="match status" value="1"/>
</dbReference>
<dbReference type="PROSITE" id="PS51374">
    <property type="entry name" value="NDPK_LIKE"/>
    <property type="match status" value="1"/>
</dbReference>
<protein>
    <recommendedName>
        <fullName>Nucleoside diphosphate kinase B</fullName>
        <shortName>NDK B</shortName>
        <shortName>NDP kinase B</shortName>
        <ecNumber>2.7.4.6</ecNumber>
    </recommendedName>
</protein>
<evidence type="ECO:0000250" key="1">
    <source>
        <dbReference type="UniProtKB" id="P15531"/>
    </source>
</evidence>
<evidence type="ECO:0000250" key="2">
    <source>
        <dbReference type="UniProtKB" id="P22392"/>
    </source>
</evidence>
<evidence type="ECO:0000255" key="3"/>
<evidence type="ECO:0000255" key="4">
    <source>
        <dbReference type="PROSITE-ProRule" id="PRU10030"/>
    </source>
</evidence>
<evidence type="ECO:0000269" key="5">
    <source>
    </source>
</evidence>
<evidence type="ECO:0000303" key="6">
    <source>
    </source>
</evidence>
<evidence type="ECO:0000305" key="7"/>
<reference evidence="7" key="1">
    <citation type="journal article" date="2007" name="J. Proteome Res.">
        <title>De novo mass spectrometry sequencing and characterization of species-specific peptides from nucleoside diphosphate kinase B for the classification of commercial fish species belonging to the family Merlucciidae.</title>
        <authorList>
            <person name="Carrera M."/>
            <person name="Canas B."/>
            <person name="Pineiro C."/>
            <person name="Vazquez J."/>
            <person name="Gallardo J.M."/>
        </authorList>
    </citation>
    <scope>PROTEIN SEQUENCE</scope>
    <source>
        <tissue evidence="5">White muscle</tissue>
    </source>
</reference>
<comment type="function">
    <text evidence="1">Major role in the synthesis of nucleoside triphosphates other than ATP.</text>
</comment>
<comment type="catalytic activity">
    <reaction evidence="1 4">
        <text>a 2'-deoxyribonucleoside 5'-diphosphate + ATP = a 2'-deoxyribonucleoside 5'-triphosphate + ADP</text>
        <dbReference type="Rhea" id="RHEA:44640"/>
        <dbReference type="ChEBI" id="CHEBI:30616"/>
        <dbReference type="ChEBI" id="CHEBI:61560"/>
        <dbReference type="ChEBI" id="CHEBI:73316"/>
        <dbReference type="ChEBI" id="CHEBI:456216"/>
        <dbReference type="EC" id="2.7.4.6"/>
    </reaction>
</comment>
<comment type="catalytic activity">
    <reaction evidence="1 4">
        <text>a ribonucleoside 5'-diphosphate + ATP = a ribonucleoside 5'-triphosphate + ADP</text>
        <dbReference type="Rhea" id="RHEA:18113"/>
        <dbReference type="ChEBI" id="CHEBI:30616"/>
        <dbReference type="ChEBI" id="CHEBI:57930"/>
        <dbReference type="ChEBI" id="CHEBI:61557"/>
        <dbReference type="ChEBI" id="CHEBI:456216"/>
        <dbReference type="EC" id="2.7.4.6"/>
    </reaction>
</comment>
<comment type="cofactor">
    <cofactor evidence="1">
        <name>Mg(2+)</name>
        <dbReference type="ChEBI" id="CHEBI:18420"/>
    </cofactor>
</comment>
<comment type="subcellular location">
    <subcellularLocation>
        <location evidence="2">Cytoplasm</location>
    </subcellularLocation>
    <subcellularLocation>
        <location evidence="2">Nucleus</location>
    </subcellularLocation>
    <subcellularLocation>
        <location evidence="2">Cell projection</location>
        <location evidence="2">Lamellipodium</location>
    </subcellularLocation>
    <subcellularLocation>
        <location evidence="2">Cell projection</location>
        <location evidence="2">Ruffle</location>
    </subcellularLocation>
</comment>
<comment type="similarity">
    <text evidence="3">Belongs to the NDK family.</text>
</comment>
<keyword id="KW-0067">ATP-binding</keyword>
<keyword id="KW-0131">Cell cycle</keyword>
<keyword id="KW-0966">Cell projection</keyword>
<keyword id="KW-0963">Cytoplasm</keyword>
<keyword id="KW-0903">Direct protein sequencing</keyword>
<keyword id="KW-0418">Kinase</keyword>
<keyword id="KW-0460">Magnesium</keyword>
<keyword id="KW-0479">Metal-binding</keyword>
<keyword id="KW-0546">Nucleotide metabolism</keyword>
<keyword id="KW-0547">Nucleotide-binding</keyword>
<keyword id="KW-0539">Nucleus</keyword>
<keyword id="KW-0597">Phosphoprotein</keyword>
<keyword id="KW-0808">Transferase</keyword>
<organism>
    <name type="scientific">Merluccius paradoxus</name>
    <name type="common">Deep-water Cape hake</name>
    <name type="synonym">Merluccius capensis paradoxus</name>
    <dbReference type="NCBI Taxonomy" id="89950"/>
    <lineage>
        <taxon>Eukaryota</taxon>
        <taxon>Metazoa</taxon>
        <taxon>Chordata</taxon>
        <taxon>Craniata</taxon>
        <taxon>Vertebrata</taxon>
        <taxon>Euteleostomi</taxon>
        <taxon>Actinopterygii</taxon>
        <taxon>Neopterygii</taxon>
        <taxon>Teleostei</taxon>
        <taxon>Neoteleostei</taxon>
        <taxon>Acanthomorphata</taxon>
        <taxon>Zeiogadaria</taxon>
        <taxon>Gadariae</taxon>
        <taxon>Gadiformes</taxon>
        <taxon>Gadoidei</taxon>
        <taxon>Merlucciidae</taxon>
        <taxon>Merluccius</taxon>
    </lineage>
</organism>